<gene>
    <name evidence="1" type="primary">rsmH</name>
    <name type="synonym">mraW</name>
    <name type="ordered locus">CbuK_1934</name>
</gene>
<accession>B6J5L7</accession>
<comment type="function">
    <text evidence="1">Specifically methylates the N4 position of cytidine in position 1402 (C1402) of 16S rRNA.</text>
</comment>
<comment type="catalytic activity">
    <reaction evidence="1">
        <text>cytidine(1402) in 16S rRNA + S-adenosyl-L-methionine = N(4)-methylcytidine(1402) in 16S rRNA + S-adenosyl-L-homocysteine + H(+)</text>
        <dbReference type="Rhea" id="RHEA:42928"/>
        <dbReference type="Rhea" id="RHEA-COMP:10286"/>
        <dbReference type="Rhea" id="RHEA-COMP:10287"/>
        <dbReference type="ChEBI" id="CHEBI:15378"/>
        <dbReference type="ChEBI" id="CHEBI:57856"/>
        <dbReference type="ChEBI" id="CHEBI:59789"/>
        <dbReference type="ChEBI" id="CHEBI:74506"/>
        <dbReference type="ChEBI" id="CHEBI:82748"/>
        <dbReference type="EC" id="2.1.1.199"/>
    </reaction>
</comment>
<comment type="subcellular location">
    <subcellularLocation>
        <location evidence="1">Cytoplasm</location>
    </subcellularLocation>
</comment>
<comment type="similarity">
    <text evidence="1">Belongs to the methyltransferase superfamily. RsmH family.</text>
</comment>
<protein>
    <recommendedName>
        <fullName evidence="1">Ribosomal RNA small subunit methyltransferase H</fullName>
        <ecNumber evidence="1">2.1.1.199</ecNumber>
    </recommendedName>
    <alternativeName>
        <fullName evidence="1">16S rRNA m(4)C1402 methyltransferase</fullName>
    </alternativeName>
    <alternativeName>
        <fullName evidence="1">rRNA (cytosine-N(4)-)-methyltransferase RsmH</fullName>
    </alternativeName>
</protein>
<dbReference type="EC" id="2.1.1.199" evidence="1"/>
<dbReference type="EMBL" id="CP001020">
    <property type="protein sequence ID" value="ACJ21043.1"/>
    <property type="molecule type" value="Genomic_DNA"/>
</dbReference>
<dbReference type="RefSeq" id="WP_005769446.1">
    <property type="nucleotide sequence ID" value="NC_011528.1"/>
</dbReference>
<dbReference type="SMR" id="B6J5L7"/>
<dbReference type="KEGG" id="cbc:CbuK_1934"/>
<dbReference type="HOGENOM" id="CLU_038422_2_0_6"/>
<dbReference type="GO" id="GO:0005737">
    <property type="term" value="C:cytoplasm"/>
    <property type="evidence" value="ECO:0007669"/>
    <property type="project" value="UniProtKB-SubCell"/>
</dbReference>
<dbReference type="GO" id="GO:0071424">
    <property type="term" value="F:rRNA (cytosine-N4-)-methyltransferase activity"/>
    <property type="evidence" value="ECO:0007669"/>
    <property type="project" value="UniProtKB-UniRule"/>
</dbReference>
<dbReference type="GO" id="GO:0070475">
    <property type="term" value="P:rRNA base methylation"/>
    <property type="evidence" value="ECO:0007669"/>
    <property type="project" value="UniProtKB-UniRule"/>
</dbReference>
<dbReference type="FunFam" id="1.10.150.170:FF:000001">
    <property type="entry name" value="Ribosomal RNA small subunit methyltransferase H"/>
    <property type="match status" value="1"/>
</dbReference>
<dbReference type="Gene3D" id="1.10.150.170">
    <property type="entry name" value="Putative methyltransferase TM0872, insert domain"/>
    <property type="match status" value="1"/>
</dbReference>
<dbReference type="Gene3D" id="3.40.50.150">
    <property type="entry name" value="Vaccinia Virus protein VP39"/>
    <property type="match status" value="1"/>
</dbReference>
<dbReference type="HAMAP" id="MF_01007">
    <property type="entry name" value="16SrRNA_methyltr_H"/>
    <property type="match status" value="1"/>
</dbReference>
<dbReference type="InterPro" id="IPR002903">
    <property type="entry name" value="RsmH"/>
</dbReference>
<dbReference type="InterPro" id="IPR023397">
    <property type="entry name" value="SAM-dep_MeTrfase_MraW_recog"/>
</dbReference>
<dbReference type="InterPro" id="IPR029063">
    <property type="entry name" value="SAM-dependent_MTases_sf"/>
</dbReference>
<dbReference type="NCBIfam" id="TIGR00006">
    <property type="entry name" value="16S rRNA (cytosine(1402)-N(4))-methyltransferase RsmH"/>
    <property type="match status" value="1"/>
</dbReference>
<dbReference type="PANTHER" id="PTHR11265:SF0">
    <property type="entry name" value="12S RRNA N4-METHYLCYTIDINE METHYLTRANSFERASE"/>
    <property type="match status" value="1"/>
</dbReference>
<dbReference type="PANTHER" id="PTHR11265">
    <property type="entry name" value="S-ADENOSYL-METHYLTRANSFERASE MRAW"/>
    <property type="match status" value="1"/>
</dbReference>
<dbReference type="Pfam" id="PF01795">
    <property type="entry name" value="Methyltransf_5"/>
    <property type="match status" value="1"/>
</dbReference>
<dbReference type="PIRSF" id="PIRSF004486">
    <property type="entry name" value="MraW"/>
    <property type="match status" value="1"/>
</dbReference>
<dbReference type="SUPFAM" id="SSF81799">
    <property type="entry name" value="Putative methyltransferase TM0872, insert domain"/>
    <property type="match status" value="1"/>
</dbReference>
<dbReference type="SUPFAM" id="SSF53335">
    <property type="entry name" value="S-adenosyl-L-methionine-dependent methyltransferases"/>
    <property type="match status" value="1"/>
</dbReference>
<proteinExistence type="inferred from homology"/>
<organism>
    <name type="scientific">Coxiella burnetii (strain CbuK_Q154)</name>
    <name type="common">Coxiella burnetii (strain Q154)</name>
    <dbReference type="NCBI Taxonomy" id="434924"/>
    <lineage>
        <taxon>Bacteria</taxon>
        <taxon>Pseudomonadati</taxon>
        <taxon>Pseudomonadota</taxon>
        <taxon>Gammaproteobacteria</taxon>
        <taxon>Legionellales</taxon>
        <taxon>Coxiellaceae</taxon>
        <taxon>Coxiella</taxon>
    </lineage>
</organism>
<reference key="1">
    <citation type="journal article" date="2009" name="Infect. Immun.">
        <title>Comparative genomics reveal extensive transposon-mediated genomic plasticity and diversity among potential effector proteins within the genus Coxiella.</title>
        <authorList>
            <person name="Beare P.A."/>
            <person name="Unsworth N."/>
            <person name="Andoh M."/>
            <person name="Voth D.E."/>
            <person name="Omsland A."/>
            <person name="Gilk S.D."/>
            <person name="Williams K.P."/>
            <person name="Sobral B.W."/>
            <person name="Kupko J.J. III"/>
            <person name="Porcella S.F."/>
            <person name="Samuel J.E."/>
            <person name="Heinzen R.A."/>
        </authorList>
    </citation>
    <scope>NUCLEOTIDE SEQUENCE [LARGE SCALE GENOMIC DNA]</scope>
    <source>
        <strain>CbuK_Q154</strain>
    </source>
</reference>
<keyword id="KW-0963">Cytoplasm</keyword>
<keyword id="KW-0489">Methyltransferase</keyword>
<keyword id="KW-0698">rRNA processing</keyword>
<keyword id="KW-0949">S-adenosyl-L-methionine</keyword>
<keyword id="KW-0808">Transferase</keyword>
<sequence>MEAHKPVLFDEVMEGLAIRPDGIYVDGTFGRGGHSFGILQRLGPNGRLMAMDKDPDAVAVANKALFEDARFSIVHETFANLQKAVRDRGWEGKVNGILLDIGVSSPQLEDAKRGFSFSKDGPLDMRMNPKQSMDAASWINQAAMEDIRRVLWNYGEERFAKRIAQAIVNAREEKPITRTQELSDIVIKAYPQREIKKHPATRTFQAIRIFINRELDELRECLPQCLETLAVGGRLCVISFHSLEDRLVKRFIQKESRDHLPREIPILAKDIKHRLKPLGSLIRPTEAEIKKNPRARSARLRIVEKLS</sequence>
<evidence type="ECO:0000255" key="1">
    <source>
        <dbReference type="HAMAP-Rule" id="MF_01007"/>
    </source>
</evidence>
<feature type="chain" id="PRO_0000386832" description="Ribosomal RNA small subunit methyltransferase H">
    <location>
        <begin position="1"/>
        <end position="307"/>
    </location>
</feature>
<feature type="binding site" evidence="1">
    <location>
        <begin position="32"/>
        <end position="34"/>
    </location>
    <ligand>
        <name>S-adenosyl-L-methionine</name>
        <dbReference type="ChEBI" id="CHEBI:59789"/>
    </ligand>
</feature>
<feature type="binding site" evidence="1">
    <location>
        <position position="52"/>
    </location>
    <ligand>
        <name>S-adenosyl-L-methionine</name>
        <dbReference type="ChEBI" id="CHEBI:59789"/>
    </ligand>
</feature>
<feature type="binding site" evidence="1">
    <location>
        <position position="78"/>
    </location>
    <ligand>
        <name>S-adenosyl-L-methionine</name>
        <dbReference type="ChEBI" id="CHEBI:59789"/>
    </ligand>
</feature>
<feature type="binding site" evidence="1">
    <location>
        <position position="100"/>
    </location>
    <ligand>
        <name>S-adenosyl-L-methionine</name>
        <dbReference type="ChEBI" id="CHEBI:59789"/>
    </ligand>
</feature>
<feature type="binding site" evidence="1">
    <location>
        <position position="107"/>
    </location>
    <ligand>
        <name>S-adenosyl-L-methionine</name>
        <dbReference type="ChEBI" id="CHEBI:59789"/>
    </ligand>
</feature>
<name>RSMH_COXB1</name>